<sequence length="217" mass="24041">MELVLGPLEARVIGALIEKEICTPDQYPLSLNALVNACNQKSNREPVLELSELDIRAVVDELIRKRLVVNTAGFNARVPRYQHRFCNTEFGTLKFSEQELGIVCELLLRGPQTPGELRSRTNRLCSFDDVTQVDAALAALIEQGPYVVKLPREPGKRESRYAHLFSGEVDLQALAEASPASSYASPAADRLSVLEEEVETLKLQLQALEARLAQLEG</sequence>
<organism>
    <name type="scientific">Aeromonas salmonicida (strain A449)</name>
    <dbReference type="NCBI Taxonomy" id="382245"/>
    <lineage>
        <taxon>Bacteria</taxon>
        <taxon>Pseudomonadati</taxon>
        <taxon>Pseudomonadota</taxon>
        <taxon>Gammaproteobacteria</taxon>
        <taxon>Aeromonadales</taxon>
        <taxon>Aeromonadaceae</taxon>
        <taxon>Aeromonas</taxon>
    </lineage>
</organism>
<feature type="chain" id="PRO_0000309369" description="UPF0502 protein ASA_1460">
    <location>
        <begin position="1"/>
        <end position="217"/>
    </location>
</feature>
<reference key="1">
    <citation type="journal article" date="2008" name="BMC Genomics">
        <title>The genome of Aeromonas salmonicida subsp. salmonicida A449: insights into the evolution of a fish pathogen.</title>
        <authorList>
            <person name="Reith M.E."/>
            <person name="Singh R.K."/>
            <person name="Curtis B."/>
            <person name="Boyd J.M."/>
            <person name="Bouevitch A."/>
            <person name="Kimball J."/>
            <person name="Munholland J."/>
            <person name="Murphy C."/>
            <person name="Sarty D."/>
            <person name="Williams J."/>
            <person name="Nash J.H."/>
            <person name="Johnson S.C."/>
            <person name="Brown L.L."/>
        </authorList>
    </citation>
    <scope>NUCLEOTIDE SEQUENCE [LARGE SCALE GENOMIC DNA]</scope>
    <source>
        <strain>A449</strain>
    </source>
</reference>
<comment type="similarity">
    <text evidence="1">Belongs to the UPF0502 family.</text>
</comment>
<dbReference type="EMBL" id="CP000644">
    <property type="protein sequence ID" value="ABO89556.1"/>
    <property type="molecule type" value="Genomic_DNA"/>
</dbReference>
<dbReference type="RefSeq" id="WP_005319007.1">
    <property type="nucleotide sequence ID" value="NC_009348.1"/>
</dbReference>
<dbReference type="SMR" id="A4SKY4"/>
<dbReference type="STRING" id="29491.GCA_000820065_02889"/>
<dbReference type="KEGG" id="asa:ASA_1460"/>
<dbReference type="PATRIC" id="fig|382245.13.peg.1443"/>
<dbReference type="eggNOG" id="COG3132">
    <property type="taxonomic scope" value="Bacteria"/>
</dbReference>
<dbReference type="HOGENOM" id="CLU_057831_2_0_6"/>
<dbReference type="Proteomes" id="UP000000225">
    <property type="component" value="Chromosome"/>
</dbReference>
<dbReference type="Gene3D" id="1.10.10.10">
    <property type="entry name" value="Winged helix-like DNA-binding domain superfamily/Winged helix DNA-binding domain"/>
    <property type="match status" value="2"/>
</dbReference>
<dbReference type="HAMAP" id="MF_01584">
    <property type="entry name" value="UPF0502"/>
    <property type="match status" value="1"/>
</dbReference>
<dbReference type="InterPro" id="IPR007432">
    <property type="entry name" value="DUF480"/>
</dbReference>
<dbReference type="InterPro" id="IPR036388">
    <property type="entry name" value="WH-like_DNA-bd_sf"/>
</dbReference>
<dbReference type="InterPro" id="IPR036390">
    <property type="entry name" value="WH_DNA-bd_sf"/>
</dbReference>
<dbReference type="PANTHER" id="PTHR38768">
    <property type="entry name" value="UPF0502 PROTEIN YCEH"/>
    <property type="match status" value="1"/>
</dbReference>
<dbReference type="PANTHER" id="PTHR38768:SF1">
    <property type="entry name" value="UPF0502 PROTEIN YCEH"/>
    <property type="match status" value="1"/>
</dbReference>
<dbReference type="Pfam" id="PF04337">
    <property type="entry name" value="DUF480"/>
    <property type="match status" value="1"/>
</dbReference>
<dbReference type="SUPFAM" id="SSF46785">
    <property type="entry name" value="Winged helix' DNA-binding domain"/>
    <property type="match status" value="2"/>
</dbReference>
<proteinExistence type="inferred from homology"/>
<evidence type="ECO:0000255" key="1">
    <source>
        <dbReference type="HAMAP-Rule" id="MF_01584"/>
    </source>
</evidence>
<gene>
    <name type="ordered locus">ASA_1460</name>
</gene>
<accession>A4SKY4</accession>
<name>Y1460_AERS4</name>
<protein>
    <recommendedName>
        <fullName evidence="1">UPF0502 protein ASA_1460</fullName>
    </recommendedName>
</protein>